<sequence length="301" mass="33880">MEDEVVRIAKKMDKMVQKKNAAGALDLLKELKNIPMTLELLQSTRIGMSVNALRKQSTDEEVTSLAKSLIKSWKKLLDGPSTDKDPEEKKKEPAISSQNSPEAREESSSSSNVSSRKDETNARDTYVSSFPRAPSTSDSVRLKCREMLAAALRTGDDYVAIGADEEELGSQIEEAIYQEIRNTDMKYKNRVRSRISNLKDAKNPNLRKNVLCGNIPPDLFARMTAEEMASDELKEMRKNLTKEAIREHQMAKTGGTQTDLFTCGKCKKKNCTYTQVQTRSADEPMTTFVVCNECGNRWKFC</sequence>
<feature type="chain" id="PRO_0000121447" description="Transcription elongation factor A protein 1">
    <location>
        <begin position="1"/>
        <end position="301"/>
    </location>
</feature>
<feature type="domain" description="TFIIS N-terminal" evidence="5">
    <location>
        <begin position="3"/>
        <end position="80"/>
    </location>
</feature>
<feature type="domain" description="TFIIS central" evidence="6">
    <location>
        <begin position="140"/>
        <end position="256"/>
    </location>
</feature>
<feature type="zinc finger region" description="TFIIS-type" evidence="4">
    <location>
        <begin position="259"/>
        <end position="299"/>
    </location>
</feature>
<feature type="region of interest" description="Disordered" evidence="7">
    <location>
        <begin position="76"/>
        <end position="139"/>
    </location>
</feature>
<feature type="compositionally biased region" description="Basic and acidic residues" evidence="7">
    <location>
        <begin position="76"/>
        <end position="93"/>
    </location>
</feature>
<feature type="binding site" evidence="4">
    <location>
        <position position="263"/>
    </location>
    <ligand>
        <name>Zn(2+)</name>
        <dbReference type="ChEBI" id="CHEBI:29105"/>
    </ligand>
</feature>
<feature type="binding site" evidence="4">
    <location>
        <position position="266"/>
    </location>
    <ligand>
        <name>Zn(2+)</name>
        <dbReference type="ChEBI" id="CHEBI:29105"/>
    </ligand>
</feature>
<feature type="binding site" evidence="4">
    <location>
        <position position="291"/>
    </location>
    <ligand>
        <name>Zn(2+)</name>
        <dbReference type="ChEBI" id="CHEBI:29105"/>
    </ligand>
</feature>
<feature type="binding site" evidence="4">
    <location>
        <position position="294"/>
    </location>
    <ligand>
        <name>Zn(2+)</name>
        <dbReference type="ChEBI" id="CHEBI:29105"/>
    </ligand>
</feature>
<feature type="modified residue" description="N-acetylmethionine" evidence="2">
    <location>
        <position position="1"/>
    </location>
</feature>
<feature type="modified residue" description="Phosphoserine" evidence="2">
    <location>
        <position position="57"/>
    </location>
</feature>
<feature type="modified residue" description="Phosphoserine" evidence="2">
    <location>
        <position position="81"/>
    </location>
</feature>
<feature type="modified residue" description="Phosphoserine" evidence="13">
    <location>
        <position position="97"/>
    </location>
</feature>
<feature type="modified residue" description="Phosphoserine" evidence="11 12 13">
    <location>
        <position position="100"/>
    </location>
</feature>
<feature type="cross-link" description="Glycyl lysine isopeptide (Lys-Gly) (interchain with G-Cter in ubiquitin)" evidence="3">
    <location>
        <position position="55"/>
    </location>
</feature>
<feature type="splice variant" id="VSP_006410" description="In isoform 1." evidence="8 9">
    <location>
        <begin position="1"/>
        <end position="35"/>
    </location>
</feature>
<comment type="function">
    <text>Necessary for efficient RNA polymerase II transcription elongation past template-encoded arresting sites. The arresting sites in DNA have the property of trapping a certain fraction of elongating RNA polymerases that pass through, resulting in locked ternary complexes. Cleavage of the nascent transcript by S-II allows the resumption of elongation from the new 3'-terminus.</text>
</comment>
<comment type="subunit">
    <text evidence="1 2">Interacts with EAF2 (By similarity). Associates with UBR5 and forms a transcription regulatory complex made of CDK9, Pol II, UBR5 and TCEA1/TFIIS (By similarity). Part of TBP-based Pol II pre-initiation complex (PIC), in which Pol II core assembles with general transcription factors and other specific initiation factors including GTF2E1, GTF2E2, GTF2F1, GTF2F2, TCEA1, ERCC2, ERCC3, GTF2H2, GTF2H3, GTF2H4, GTF2H5, GTF2A1, GTF2A2, GTF2B and TBP; this large multi-subunit PIC complex mediates DNA unwinding and targets Pol II core to the transcription start site where the first phosphodiester bond forms (By similarity).</text>
</comment>
<comment type="subcellular location">
    <subcellularLocation>
        <location>Nucleus</location>
    </subcellularLocation>
</comment>
<comment type="alternative products">
    <event type="alternative splicing"/>
    <isoform>
        <id>P10711-1</id>
        <name>2</name>
        <name>PSII-3</name>
        <sequence type="displayed"/>
    </isoform>
    <isoform>
        <id>P10711-2</id>
        <name>1</name>
        <name>PSII-2</name>
        <sequence type="described" ref="VSP_006410"/>
    </isoform>
</comment>
<comment type="miscellaneous">
    <text>S-II binds to RNA-polymerase II in the absence of transcription.</text>
</comment>
<comment type="similarity">
    <text evidence="10">Belongs to the TFS-II family.</text>
</comment>
<comment type="sequence caution" evidence="10">
    <conflict type="miscellaneous discrepancy">
        <sequence resource="EMBL-CDS" id="BAA00768"/>
    </conflict>
    <text>Chimeric cDNA.</text>
</comment>
<gene>
    <name type="primary">Tcea1</name>
    <name type="synonym">Tceat</name>
</gene>
<name>TCEA1_MOUSE</name>
<protein>
    <recommendedName>
        <fullName>Transcription elongation factor A protein 1</fullName>
    </recommendedName>
    <alternativeName>
        <fullName>Transcription elongation factor S-II protein 1</fullName>
    </alternativeName>
    <alternativeName>
        <fullName>Transcription elongation factor TFIIS.o</fullName>
    </alternativeName>
</protein>
<proteinExistence type="evidence at protein level"/>
<organism>
    <name type="scientific">Mus musculus</name>
    <name type="common">Mouse</name>
    <dbReference type="NCBI Taxonomy" id="10090"/>
    <lineage>
        <taxon>Eukaryota</taxon>
        <taxon>Metazoa</taxon>
        <taxon>Chordata</taxon>
        <taxon>Craniata</taxon>
        <taxon>Vertebrata</taxon>
        <taxon>Euteleostomi</taxon>
        <taxon>Mammalia</taxon>
        <taxon>Eutheria</taxon>
        <taxon>Euarchontoglires</taxon>
        <taxon>Glires</taxon>
        <taxon>Rodentia</taxon>
        <taxon>Myomorpha</taxon>
        <taxon>Muroidea</taxon>
        <taxon>Muridae</taxon>
        <taxon>Murinae</taxon>
        <taxon>Mus</taxon>
        <taxon>Mus</taxon>
    </lineage>
</organism>
<reference key="1">
    <citation type="journal article" date="1988" name="J. Biol. Chem.">
        <title>Molecular cloning and characterization of cDNA for eukaryotic transcription factor S-II.</title>
        <authorList>
            <person name="Hirashima S."/>
            <person name="Hirai H."/>
            <person name="Nakanishi Y."/>
            <person name="Natori S."/>
        </authorList>
    </citation>
    <scope>NUCLEOTIDE SEQUENCE [MRNA] (ISOFORMS 1 AND 2)</scope>
    <scope>PARTIAL PROTEIN SEQUENCE</scope>
</reference>
<reference key="2">
    <citation type="journal article" date="1991" name="J. Biochem.">
        <title>Heterogeneity and tissue-specific expression of eukaryotic transcription factor S-II-related protein mRNA.</title>
        <authorList>
            <person name="Kanai A."/>
            <person name="Kuzuhara T."/>
            <person name="Sekimizu K."/>
            <person name="Natori S."/>
        </authorList>
    </citation>
    <scope>NUCLEOTIDE SEQUENCE [MRNA]</scope>
    <source>
        <tissue>Liver</tissue>
        <tissue>Mammary gland</tissue>
    </source>
</reference>
<reference key="3">
    <citation type="journal article" date="2004" name="Genome Res.">
        <title>The status, quality, and expansion of the NIH full-length cDNA project: the Mammalian Gene Collection (MGC).</title>
        <authorList>
            <consortium name="The MGC Project Team"/>
        </authorList>
    </citation>
    <scope>NUCLEOTIDE SEQUENCE [LARGE SCALE MRNA] (ISOFORMS 1 AND 2)</scope>
    <source>
        <strain>Czech II</strain>
        <strain>FVB/N</strain>
        <tissue>Mammary gland</tissue>
        <tissue>Olfactory epithelium</tissue>
    </source>
</reference>
<reference key="4">
    <citation type="journal article" date="2003" name="J. Biochem.">
        <title>Identification of a novel tissue-specific transcriptional activator FESTA as a protein that interacts with the transcription elongation factor S-II.</title>
        <authorList>
            <person name="Saso K."/>
            <person name="Ito T."/>
            <person name="Natori S."/>
            <person name="Sekimizu K."/>
        </authorList>
    </citation>
    <scope>INTERACTION WITH EAF2</scope>
</reference>
<reference key="5">
    <citation type="journal article" date="2007" name="Proc. Natl. Acad. Sci. U.S.A.">
        <title>Large-scale phosphorylation analysis of mouse liver.</title>
        <authorList>
            <person name="Villen J."/>
            <person name="Beausoleil S.A."/>
            <person name="Gerber S.A."/>
            <person name="Gygi S.P."/>
        </authorList>
    </citation>
    <scope>PHOSPHORYLATION [LARGE SCALE ANALYSIS] AT SER-100</scope>
    <scope>IDENTIFICATION BY MASS SPECTROMETRY [LARGE SCALE ANALYSIS]</scope>
    <source>
        <tissue>Liver</tissue>
    </source>
</reference>
<reference key="6">
    <citation type="journal article" date="2008" name="J. Proteome Res.">
        <title>Specific phosphopeptide enrichment with immobilized titanium ion affinity chromatography adsorbent for phosphoproteome analysis.</title>
        <authorList>
            <person name="Zhou H."/>
            <person name="Ye M."/>
            <person name="Dong J."/>
            <person name="Han G."/>
            <person name="Jiang X."/>
            <person name="Wu R."/>
            <person name="Zou H."/>
        </authorList>
    </citation>
    <scope>PHOSPHORYLATION [LARGE SCALE ANALYSIS] AT SER-100</scope>
    <scope>IDENTIFICATION BY MASS SPECTROMETRY [LARGE SCALE ANALYSIS]</scope>
    <source>
        <tissue>Liver</tissue>
    </source>
</reference>
<reference key="7">
    <citation type="journal article" date="2010" name="Cell">
        <title>A tissue-specific atlas of mouse protein phosphorylation and expression.</title>
        <authorList>
            <person name="Huttlin E.L."/>
            <person name="Jedrychowski M.P."/>
            <person name="Elias J.E."/>
            <person name="Goswami T."/>
            <person name="Rad R."/>
            <person name="Beausoleil S.A."/>
            <person name="Villen J."/>
            <person name="Haas W."/>
            <person name="Sowa M.E."/>
            <person name="Gygi S.P."/>
        </authorList>
    </citation>
    <scope>PHOSPHORYLATION [LARGE SCALE ANALYSIS] AT SER-97 AND SER-100</scope>
    <scope>IDENTIFICATION BY MASS SPECTROMETRY [LARGE SCALE ANALYSIS]</scope>
    <source>
        <tissue>Brain</tissue>
        <tissue>Brown adipose tissue</tissue>
        <tissue>Heart</tissue>
        <tissue>Kidney</tissue>
        <tissue>Liver</tissue>
        <tissue>Lung</tissue>
        <tissue>Pancreas</tissue>
        <tissue>Spleen</tissue>
        <tissue>Testis</tissue>
    </source>
</reference>
<keyword id="KW-0007">Acetylation</keyword>
<keyword id="KW-0025">Alternative splicing</keyword>
<keyword id="KW-0903">Direct protein sequencing</keyword>
<keyword id="KW-0238">DNA-binding</keyword>
<keyword id="KW-1017">Isopeptide bond</keyword>
<keyword id="KW-0479">Metal-binding</keyword>
<keyword id="KW-0539">Nucleus</keyword>
<keyword id="KW-0597">Phosphoprotein</keyword>
<keyword id="KW-1185">Reference proteome</keyword>
<keyword id="KW-0804">Transcription</keyword>
<keyword id="KW-0805">Transcription regulation</keyword>
<keyword id="KW-0832">Ubl conjugation</keyword>
<keyword id="KW-0862">Zinc</keyword>
<keyword id="KW-0863">Zinc-finger</keyword>
<evidence type="ECO:0000250" key="1"/>
<evidence type="ECO:0000250" key="2">
    <source>
        <dbReference type="UniProtKB" id="P23193"/>
    </source>
</evidence>
<evidence type="ECO:0000250" key="3">
    <source>
        <dbReference type="UniProtKB" id="Q15560"/>
    </source>
</evidence>
<evidence type="ECO:0000255" key="4">
    <source>
        <dbReference type="PROSITE-ProRule" id="PRU00472"/>
    </source>
</evidence>
<evidence type="ECO:0000255" key="5">
    <source>
        <dbReference type="PROSITE-ProRule" id="PRU00649"/>
    </source>
</evidence>
<evidence type="ECO:0000255" key="6">
    <source>
        <dbReference type="PROSITE-ProRule" id="PRU00651"/>
    </source>
</evidence>
<evidence type="ECO:0000256" key="7">
    <source>
        <dbReference type="SAM" id="MobiDB-lite"/>
    </source>
</evidence>
<evidence type="ECO:0000303" key="8">
    <source>
    </source>
</evidence>
<evidence type="ECO:0000303" key="9">
    <source>
    </source>
</evidence>
<evidence type="ECO:0000305" key="10"/>
<evidence type="ECO:0007744" key="11">
    <source>
    </source>
</evidence>
<evidence type="ECO:0007744" key="12">
    <source>
    </source>
</evidence>
<evidence type="ECO:0007744" key="13">
    <source>
    </source>
</evidence>
<dbReference type="EMBL" id="M18209">
    <property type="protein sequence ID" value="AAA40418.1"/>
    <property type="molecule type" value="mRNA"/>
</dbReference>
<dbReference type="EMBL" id="M18210">
    <property type="protein sequence ID" value="AAA40419.1"/>
    <property type="molecule type" value="mRNA"/>
</dbReference>
<dbReference type="EMBL" id="D00925">
    <property type="protein sequence ID" value="BAA00768.1"/>
    <property type="status" value="ALT_SEQ"/>
    <property type="molecule type" value="mRNA"/>
</dbReference>
<dbReference type="EMBL" id="BC006022">
    <property type="protein sequence ID" value="AAH06022.1"/>
    <property type="molecule type" value="mRNA"/>
</dbReference>
<dbReference type="EMBL" id="BC061490">
    <property type="protein sequence ID" value="AAH61490.1"/>
    <property type="molecule type" value="mRNA"/>
</dbReference>
<dbReference type="EMBL" id="BC083127">
    <property type="protein sequence ID" value="AAH83127.1"/>
    <property type="molecule type" value="mRNA"/>
</dbReference>
<dbReference type="CCDS" id="CCDS35505.1">
    <molecule id="P10711-1"/>
</dbReference>
<dbReference type="PIR" id="A29950">
    <property type="entry name" value="A29950"/>
</dbReference>
<dbReference type="RefSeq" id="NP_001153222.1">
    <property type="nucleotide sequence ID" value="NM_001159750.1"/>
</dbReference>
<dbReference type="RefSeq" id="NP_001153223.1">
    <property type="nucleotide sequence ID" value="NM_001159751.1"/>
</dbReference>
<dbReference type="RefSeq" id="NP_035671.1">
    <molecule id="P10711-1"/>
    <property type="nucleotide sequence ID" value="NM_011541.4"/>
</dbReference>
<dbReference type="SMR" id="P10711"/>
<dbReference type="BioGRID" id="203995">
    <property type="interactions" value="16"/>
</dbReference>
<dbReference type="FunCoup" id="P10711">
    <property type="interactions" value="5038"/>
</dbReference>
<dbReference type="IntAct" id="P10711">
    <property type="interactions" value="2"/>
</dbReference>
<dbReference type="MINT" id="P10711"/>
<dbReference type="STRING" id="10090.ENSMUSP00000129157"/>
<dbReference type="GlyGen" id="P10711">
    <property type="glycosylation" value="3 sites, 1 N-linked glycan (1 site)"/>
</dbReference>
<dbReference type="iPTMnet" id="P10711"/>
<dbReference type="PhosphoSitePlus" id="P10711"/>
<dbReference type="SwissPalm" id="P10711"/>
<dbReference type="jPOST" id="P10711"/>
<dbReference type="PaxDb" id="10090-ENSMUSP00000129157"/>
<dbReference type="PeptideAtlas" id="P10711"/>
<dbReference type="ProteomicsDB" id="263021">
    <molecule id="P10711-1"/>
</dbReference>
<dbReference type="ProteomicsDB" id="263022">
    <molecule id="P10711-2"/>
</dbReference>
<dbReference type="Pumba" id="P10711"/>
<dbReference type="Antibodypedia" id="6001">
    <property type="antibodies" value="222 antibodies from 27 providers"/>
</dbReference>
<dbReference type="DNASU" id="21399"/>
<dbReference type="Ensembl" id="ENSMUST00000081551.14">
    <molecule id="P10711-1"/>
    <property type="protein sequence ID" value="ENSMUSP00000080266.8"/>
    <property type="gene ID" value="ENSMUSG00000033813.16"/>
</dbReference>
<dbReference type="GeneID" id="21399"/>
<dbReference type="KEGG" id="mmu:21399"/>
<dbReference type="UCSC" id="uc007afi.2">
    <molecule id="P10711-1"/>
    <property type="organism name" value="mouse"/>
</dbReference>
<dbReference type="AGR" id="MGI:1196624"/>
<dbReference type="CTD" id="6917"/>
<dbReference type="MGI" id="MGI:1196624">
    <property type="gene designation" value="Tcea1"/>
</dbReference>
<dbReference type="VEuPathDB" id="HostDB:ENSMUSG00000033813"/>
<dbReference type="eggNOG" id="KOG1105">
    <property type="taxonomic scope" value="Eukaryota"/>
</dbReference>
<dbReference type="GeneTree" id="ENSGT00940000155121"/>
<dbReference type="HOGENOM" id="CLU_037637_2_0_1"/>
<dbReference type="InParanoid" id="P10711"/>
<dbReference type="OMA" id="RFVVMTH"/>
<dbReference type="OrthoDB" id="44867at2759"/>
<dbReference type="PhylomeDB" id="P10711"/>
<dbReference type="Reactome" id="R-MMU-112382">
    <property type="pathway name" value="Formation of RNA Pol II elongation complex"/>
</dbReference>
<dbReference type="Reactome" id="R-MMU-674695">
    <property type="pathway name" value="RNA Polymerase II Pre-transcription Events"/>
</dbReference>
<dbReference type="Reactome" id="R-MMU-6781823">
    <property type="pathway name" value="Formation of TC-NER Pre-Incision Complex"/>
</dbReference>
<dbReference type="Reactome" id="R-MMU-6782135">
    <property type="pathway name" value="Dual incision in TC-NER"/>
</dbReference>
<dbReference type="Reactome" id="R-MMU-6782210">
    <property type="pathway name" value="Gap-filling DNA repair synthesis and ligation in TC-NER"/>
</dbReference>
<dbReference type="Reactome" id="R-MMU-6796648">
    <property type="pathway name" value="TP53 Regulates Transcription of DNA Repair Genes"/>
</dbReference>
<dbReference type="Reactome" id="R-MMU-75955">
    <property type="pathway name" value="RNA Polymerase II Transcription Elongation"/>
</dbReference>
<dbReference type="BioGRID-ORCS" id="21399">
    <property type="hits" value="10 hits in 82 CRISPR screens"/>
</dbReference>
<dbReference type="ChiTaRS" id="Tcea1">
    <property type="organism name" value="mouse"/>
</dbReference>
<dbReference type="PRO" id="PR:P10711"/>
<dbReference type="Proteomes" id="UP000000589">
    <property type="component" value="Chromosome 1"/>
</dbReference>
<dbReference type="RNAct" id="P10711">
    <property type="molecule type" value="protein"/>
</dbReference>
<dbReference type="Bgee" id="ENSMUSG00000033813">
    <property type="expression patterns" value="Expressed in animal zygote and 267 other cell types or tissues"/>
</dbReference>
<dbReference type="ExpressionAtlas" id="P10711">
    <property type="expression patterns" value="baseline and differential"/>
</dbReference>
<dbReference type="GO" id="GO:0005730">
    <property type="term" value="C:nucleolus"/>
    <property type="evidence" value="ECO:0007669"/>
    <property type="project" value="Ensembl"/>
</dbReference>
<dbReference type="GO" id="GO:0005654">
    <property type="term" value="C:nucleoplasm"/>
    <property type="evidence" value="ECO:0000314"/>
    <property type="project" value="MGI"/>
</dbReference>
<dbReference type="GO" id="GO:0005669">
    <property type="term" value="C:transcription factor TFIID complex"/>
    <property type="evidence" value="ECO:0007669"/>
    <property type="project" value="Ensembl"/>
</dbReference>
<dbReference type="GO" id="GO:0003677">
    <property type="term" value="F:DNA binding"/>
    <property type="evidence" value="ECO:0007669"/>
    <property type="project" value="UniProtKB-KW"/>
</dbReference>
<dbReference type="GO" id="GO:0008270">
    <property type="term" value="F:zinc ion binding"/>
    <property type="evidence" value="ECO:0007669"/>
    <property type="project" value="UniProtKB-KW"/>
</dbReference>
<dbReference type="GO" id="GO:0030218">
    <property type="term" value="P:erythrocyte differentiation"/>
    <property type="evidence" value="ECO:0000315"/>
    <property type="project" value="MGI"/>
</dbReference>
<dbReference type="GO" id="GO:0045893">
    <property type="term" value="P:positive regulation of DNA-templated transcription"/>
    <property type="evidence" value="ECO:0000314"/>
    <property type="project" value="MGI"/>
</dbReference>
<dbReference type="GO" id="GO:0045944">
    <property type="term" value="P:positive regulation of transcription by RNA polymerase II"/>
    <property type="evidence" value="ECO:0000314"/>
    <property type="project" value="MGI"/>
</dbReference>
<dbReference type="GO" id="GO:0006368">
    <property type="term" value="P:transcription elongation by RNA polymerase II"/>
    <property type="evidence" value="ECO:0007669"/>
    <property type="project" value="InterPro"/>
</dbReference>
<dbReference type="CDD" id="cd00183">
    <property type="entry name" value="TFIIS_I"/>
    <property type="match status" value="1"/>
</dbReference>
<dbReference type="CDD" id="cd13749">
    <property type="entry name" value="Zn-ribbon_TFIIS"/>
    <property type="match status" value="1"/>
</dbReference>
<dbReference type="FunFam" id="2.20.25.10:FF:000001">
    <property type="entry name" value="Probable Transcription elongation factor S-II"/>
    <property type="match status" value="1"/>
</dbReference>
<dbReference type="FunFam" id="1.10.472.30:FF:000001">
    <property type="entry name" value="Transcription elongation factor A (SII), 1"/>
    <property type="match status" value="1"/>
</dbReference>
<dbReference type="FunFam" id="1.20.930.10:FF:000002">
    <property type="entry name" value="Transcription elongation factor A (SII), 1"/>
    <property type="match status" value="1"/>
</dbReference>
<dbReference type="Gene3D" id="2.20.25.10">
    <property type="match status" value="1"/>
</dbReference>
<dbReference type="Gene3D" id="1.20.930.10">
    <property type="entry name" value="Conserved domain common to transcription factors TFIIS, elongin A, CRSP70"/>
    <property type="match status" value="1"/>
</dbReference>
<dbReference type="Gene3D" id="1.10.472.30">
    <property type="entry name" value="Transcription elongation factor S-II, central domain"/>
    <property type="match status" value="1"/>
</dbReference>
<dbReference type="InterPro" id="IPR035100">
    <property type="entry name" value="TF_IIS-typ"/>
</dbReference>
<dbReference type="InterPro" id="IPR003617">
    <property type="entry name" value="TFIIS/CRSP70_N_sub"/>
</dbReference>
<dbReference type="InterPro" id="IPR035441">
    <property type="entry name" value="TFIIS/LEDGF_dom_sf"/>
</dbReference>
<dbReference type="InterPro" id="IPR003618">
    <property type="entry name" value="TFIIS_cen_dom"/>
</dbReference>
<dbReference type="InterPro" id="IPR036575">
    <property type="entry name" value="TFIIS_cen_dom_sf"/>
</dbReference>
<dbReference type="InterPro" id="IPR017923">
    <property type="entry name" value="TFIIS_N"/>
</dbReference>
<dbReference type="InterPro" id="IPR006289">
    <property type="entry name" value="TFSII"/>
</dbReference>
<dbReference type="InterPro" id="IPR001222">
    <property type="entry name" value="Znf_TFIIS"/>
</dbReference>
<dbReference type="NCBIfam" id="TIGR01385">
    <property type="entry name" value="TFSII"/>
    <property type="match status" value="1"/>
</dbReference>
<dbReference type="PANTHER" id="PTHR11477:SF1">
    <property type="entry name" value="TRANSCRIPTION ELONGATION FACTOR A PROTEIN 1"/>
    <property type="match status" value="1"/>
</dbReference>
<dbReference type="PANTHER" id="PTHR11477">
    <property type="entry name" value="TRANSCRIPTION FACTOR S-II ZINC FINGER DOMAIN-CONTAINING PROTEIN"/>
    <property type="match status" value="1"/>
</dbReference>
<dbReference type="Pfam" id="PF08711">
    <property type="entry name" value="Med26"/>
    <property type="match status" value="1"/>
</dbReference>
<dbReference type="Pfam" id="PF07500">
    <property type="entry name" value="TFIIS_M"/>
    <property type="match status" value="1"/>
</dbReference>
<dbReference type="Pfam" id="PF01096">
    <property type="entry name" value="Zn_ribbon_TFIIS"/>
    <property type="match status" value="1"/>
</dbReference>
<dbReference type="PIRSF" id="PIRSF006704">
    <property type="entry name" value="TF_IIS"/>
    <property type="match status" value="1"/>
</dbReference>
<dbReference type="SMART" id="SM00510">
    <property type="entry name" value="TFS2M"/>
    <property type="match status" value="1"/>
</dbReference>
<dbReference type="SMART" id="SM00509">
    <property type="entry name" value="TFS2N"/>
    <property type="match status" value="1"/>
</dbReference>
<dbReference type="SMART" id="SM00440">
    <property type="entry name" value="ZnF_C2C2"/>
    <property type="match status" value="1"/>
</dbReference>
<dbReference type="SUPFAM" id="SSF47676">
    <property type="entry name" value="Conserved domain common to transcription factors TFIIS, elongin A, CRSP70"/>
    <property type="match status" value="1"/>
</dbReference>
<dbReference type="SUPFAM" id="SSF46942">
    <property type="entry name" value="Elongation factor TFIIS domain 2"/>
    <property type="match status" value="1"/>
</dbReference>
<dbReference type="SUPFAM" id="SSF57783">
    <property type="entry name" value="Zinc beta-ribbon"/>
    <property type="match status" value="1"/>
</dbReference>
<dbReference type="PROSITE" id="PS51321">
    <property type="entry name" value="TFIIS_CENTRAL"/>
    <property type="match status" value="1"/>
</dbReference>
<dbReference type="PROSITE" id="PS51319">
    <property type="entry name" value="TFIIS_N"/>
    <property type="match status" value="1"/>
</dbReference>
<dbReference type="PROSITE" id="PS00466">
    <property type="entry name" value="ZF_TFIIS_1"/>
    <property type="match status" value="1"/>
</dbReference>
<dbReference type="PROSITE" id="PS51133">
    <property type="entry name" value="ZF_TFIIS_2"/>
    <property type="match status" value="1"/>
</dbReference>
<accession>P10711</accession>
<accession>P10712</accession>
<accession>P23713</accession>